<dbReference type="EC" id="3.6.1.31" evidence="1"/>
<dbReference type="EMBL" id="CP000116">
    <property type="protein sequence ID" value="AAZ97659.1"/>
    <property type="molecule type" value="Genomic_DNA"/>
</dbReference>
<dbReference type="RefSeq" id="WP_011312218.1">
    <property type="nucleotide sequence ID" value="NC_007404.1"/>
</dbReference>
<dbReference type="SMR" id="Q3SI69"/>
<dbReference type="STRING" id="292415.Tbd_1706"/>
<dbReference type="KEGG" id="tbd:Tbd_1706"/>
<dbReference type="eggNOG" id="COG0140">
    <property type="taxonomic scope" value="Bacteria"/>
</dbReference>
<dbReference type="HOGENOM" id="CLU_123337_1_2_4"/>
<dbReference type="OrthoDB" id="9814738at2"/>
<dbReference type="UniPathway" id="UPA00031">
    <property type="reaction ID" value="UER00007"/>
</dbReference>
<dbReference type="Proteomes" id="UP000008291">
    <property type="component" value="Chromosome"/>
</dbReference>
<dbReference type="GO" id="GO:0005737">
    <property type="term" value="C:cytoplasm"/>
    <property type="evidence" value="ECO:0007669"/>
    <property type="project" value="UniProtKB-SubCell"/>
</dbReference>
<dbReference type="GO" id="GO:0005524">
    <property type="term" value="F:ATP binding"/>
    <property type="evidence" value="ECO:0007669"/>
    <property type="project" value="UniProtKB-KW"/>
</dbReference>
<dbReference type="GO" id="GO:0004636">
    <property type="term" value="F:phosphoribosyl-ATP diphosphatase activity"/>
    <property type="evidence" value="ECO:0007669"/>
    <property type="project" value="UniProtKB-UniRule"/>
</dbReference>
<dbReference type="GO" id="GO:0000105">
    <property type="term" value="P:L-histidine biosynthetic process"/>
    <property type="evidence" value="ECO:0007669"/>
    <property type="project" value="UniProtKB-UniRule"/>
</dbReference>
<dbReference type="CDD" id="cd11534">
    <property type="entry name" value="NTP-PPase_HisIE_like"/>
    <property type="match status" value="1"/>
</dbReference>
<dbReference type="FunFam" id="1.10.287.1080:FF:000002">
    <property type="entry name" value="Histidine biosynthesis bifunctional protein HisIE"/>
    <property type="match status" value="1"/>
</dbReference>
<dbReference type="Gene3D" id="1.10.287.1080">
    <property type="entry name" value="MazG-like"/>
    <property type="match status" value="1"/>
</dbReference>
<dbReference type="HAMAP" id="MF_01020">
    <property type="entry name" value="HisE"/>
    <property type="match status" value="1"/>
</dbReference>
<dbReference type="InterPro" id="IPR008179">
    <property type="entry name" value="HisE"/>
</dbReference>
<dbReference type="InterPro" id="IPR021130">
    <property type="entry name" value="PRib-ATP_PPHydrolase-like"/>
</dbReference>
<dbReference type="NCBIfam" id="TIGR03188">
    <property type="entry name" value="histidine_hisI"/>
    <property type="match status" value="1"/>
</dbReference>
<dbReference type="NCBIfam" id="NF001611">
    <property type="entry name" value="PRK00400.1-3"/>
    <property type="match status" value="1"/>
</dbReference>
<dbReference type="PANTHER" id="PTHR42945">
    <property type="entry name" value="HISTIDINE BIOSYNTHESIS BIFUNCTIONAL PROTEIN"/>
    <property type="match status" value="1"/>
</dbReference>
<dbReference type="PANTHER" id="PTHR42945:SF9">
    <property type="entry name" value="HISTIDINE BIOSYNTHESIS BIFUNCTIONAL PROTEIN HISIE"/>
    <property type="match status" value="1"/>
</dbReference>
<dbReference type="Pfam" id="PF01503">
    <property type="entry name" value="PRA-PH"/>
    <property type="match status" value="1"/>
</dbReference>
<dbReference type="SUPFAM" id="SSF101386">
    <property type="entry name" value="all-alpha NTP pyrophosphatases"/>
    <property type="match status" value="1"/>
</dbReference>
<protein>
    <recommendedName>
        <fullName evidence="1">Phosphoribosyl-ATP pyrophosphatase</fullName>
        <shortName evidence="1">PRA-PH</shortName>
        <ecNumber evidence="1">3.6.1.31</ecNumber>
    </recommendedName>
</protein>
<name>HIS2_THIDA</name>
<reference key="1">
    <citation type="journal article" date="2006" name="J. Bacteriol.">
        <title>The genome sequence of the obligately chemolithoautotrophic, facultatively anaerobic bacterium Thiobacillus denitrificans.</title>
        <authorList>
            <person name="Beller H.R."/>
            <person name="Chain P.S."/>
            <person name="Letain T.E."/>
            <person name="Chakicherla A."/>
            <person name="Larimer F.W."/>
            <person name="Richardson P.M."/>
            <person name="Coleman M.A."/>
            <person name="Wood A.P."/>
            <person name="Kelly D.P."/>
        </authorList>
    </citation>
    <scope>NUCLEOTIDE SEQUENCE [LARGE SCALE GENOMIC DNA]</scope>
    <source>
        <strain>ATCC 25259 / T1</strain>
    </source>
</reference>
<proteinExistence type="inferred from homology"/>
<evidence type="ECO:0000255" key="1">
    <source>
        <dbReference type="HAMAP-Rule" id="MF_01020"/>
    </source>
</evidence>
<organism>
    <name type="scientific">Thiobacillus denitrificans (strain ATCC 25259 / T1)</name>
    <dbReference type="NCBI Taxonomy" id="292415"/>
    <lineage>
        <taxon>Bacteria</taxon>
        <taxon>Pseudomonadati</taxon>
        <taxon>Pseudomonadota</taxon>
        <taxon>Betaproteobacteria</taxon>
        <taxon>Nitrosomonadales</taxon>
        <taxon>Thiobacillaceae</taxon>
        <taxon>Thiobacillus</taxon>
    </lineage>
</organism>
<sequence>MSDILDRLAEILEARKQASPDASYVARLYAKGTDAILKKIGEEATETVMAAKDDQAEKIIYEVADLWFHTLVLLAHKGLKPADVLEELARREGLSGLTEKANRQGGST</sequence>
<feature type="chain" id="PRO_0000230193" description="Phosphoribosyl-ATP pyrophosphatase">
    <location>
        <begin position="1"/>
        <end position="108"/>
    </location>
</feature>
<accession>Q3SI69</accession>
<comment type="catalytic activity">
    <reaction evidence="1">
        <text>1-(5-phospho-beta-D-ribosyl)-ATP + H2O = 1-(5-phospho-beta-D-ribosyl)-5'-AMP + diphosphate + H(+)</text>
        <dbReference type="Rhea" id="RHEA:22828"/>
        <dbReference type="ChEBI" id="CHEBI:15377"/>
        <dbReference type="ChEBI" id="CHEBI:15378"/>
        <dbReference type="ChEBI" id="CHEBI:33019"/>
        <dbReference type="ChEBI" id="CHEBI:59457"/>
        <dbReference type="ChEBI" id="CHEBI:73183"/>
        <dbReference type="EC" id="3.6.1.31"/>
    </reaction>
</comment>
<comment type="pathway">
    <text evidence="1">Amino-acid biosynthesis; L-histidine biosynthesis; L-histidine from 5-phospho-alpha-D-ribose 1-diphosphate: step 2/9.</text>
</comment>
<comment type="subcellular location">
    <subcellularLocation>
        <location evidence="1">Cytoplasm</location>
    </subcellularLocation>
</comment>
<comment type="similarity">
    <text evidence="1">Belongs to the PRA-PH family.</text>
</comment>
<keyword id="KW-0028">Amino-acid biosynthesis</keyword>
<keyword id="KW-0067">ATP-binding</keyword>
<keyword id="KW-0963">Cytoplasm</keyword>
<keyword id="KW-0368">Histidine biosynthesis</keyword>
<keyword id="KW-0378">Hydrolase</keyword>
<keyword id="KW-0547">Nucleotide-binding</keyword>
<keyword id="KW-1185">Reference proteome</keyword>
<gene>
    <name evidence="1" type="primary">hisE</name>
    <name type="ordered locus">Tbd_1706</name>
</gene>